<accession>Q8Z6N7</accession>
<organism>
    <name type="scientific">Salmonella typhi</name>
    <dbReference type="NCBI Taxonomy" id="90370"/>
    <lineage>
        <taxon>Bacteria</taxon>
        <taxon>Pseudomonadati</taxon>
        <taxon>Pseudomonadota</taxon>
        <taxon>Gammaproteobacteria</taxon>
        <taxon>Enterobacterales</taxon>
        <taxon>Enterobacteriaceae</taxon>
        <taxon>Salmonella</taxon>
    </lineage>
</organism>
<comment type="function">
    <text evidence="1">Multidrug efflux pump that functions probably as a Na(+)/drug antiporter.</text>
</comment>
<comment type="subcellular location">
    <subcellularLocation>
        <location evidence="1">Cell inner membrane</location>
        <topology evidence="1">Multi-pass membrane protein</topology>
    </subcellularLocation>
</comment>
<comment type="similarity">
    <text evidence="3">Belongs to the multi antimicrobial extrusion (MATE) (TC 2.A.66.1) family. MdtK subfamily.</text>
</comment>
<protein>
    <recommendedName>
        <fullName>Multidrug resistance protein MdtK</fullName>
    </recommendedName>
    <alternativeName>
        <fullName>Multidrug-efflux transporter</fullName>
    </alternativeName>
</protein>
<keyword id="KW-0050">Antiport</keyword>
<keyword id="KW-0997">Cell inner membrane</keyword>
<keyword id="KW-1003">Cell membrane</keyword>
<keyword id="KW-0406">Ion transport</keyword>
<keyword id="KW-0472">Membrane</keyword>
<keyword id="KW-0915">Sodium</keyword>
<keyword id="KW-0739">Sodium transport</keyword>
<keyword id="KW-0812">Transmembrane</keyword>
<keyword id="KW-1133">Transmembrane helix</keyword>
<keyword id="KW-0813">Transport</keyword>
<reference key="1">
    <citation type="journal article" date="2001" name="Nature">
        <title>Complete genome sequence of a multiple drug resistant Salmonella enterica serovar Typhi CT18.</title>
        <authorList>
            <person name="Parkhill J."/>
            <person name="Dougan G."/>
            <person name="James K.D."/>
            <person name="Thomson N.R."/>
            <person name="Pickard D."/>
            <person name="Wain J."/>
            <person name="Churcher C.M."/>
            <person name="Mungall K.L."/>
            <person name="Bentley S.D."/>
            <person name="Holden M.T.G."/>
            <person name="Sebaihia M."/>
            <person name="Baker S."/>
            <person name="Basham D."/>
            <person name="Brooks K."/>
            <person name="Chillingworth T."/>
            <person name="Connerton P."/>
            <person name="Cronin A."/>
            <person name="Davis P."/>
            <person name="Davies R.M."/>
            <person name="Dowd L."/>
            <person name="White N."/>
            <person name="Farrar J."/>
            <person name="Feltwell T."/>
            <person name="Hamlin N."/>
            <person name="Haque A."/>
            <person name="Hien T.T."/>
            <person name="Holroyd S."/>
            <person name="Jagels K."/>
            <person name="Krogh A."/>
            <person name="Larsen T.S."/>
            <person name="Leather S."/>
            <person name="Moule S."/>
            <person name="O'Gaora P."/>
            <person name="Parry C."/>
            <person name="Quail M.A."/>
            <person name="Rutherford K.M."/>
            <person name="Simmonds M."/>
            <person name="Skelton J."/>
            <person name="Stevens K."/>
            <person name="Whitehead S."/>
            <person name="Barrell B.G."/>
        </authorList>
    </citation>
    <scope>NUCLEOTIDE SEQUENCE [LARGE SCALE GENOMIC DNA]</scope>
    <source>
        <strain>CT18</strain>
    </source>
</reference>
<reference key="2">
    <citation type="journal article" date="2003" name="J. Bacteriol.">
        <title>Comparative genomics of Salmonella enterica serovar Typhi strains Ty2 and CT18.</title>
        <authorList>
            <person name="Deng W."/>
            <person name="Liou S.-R."/>
            <person name="Plunkett G. III"/>
            <person name="Mayhew G.F."/>
            <person name="Rose D.J."/>
            <person name="Burland V."/>
            <person name="Kodoyianni V."/>
            <person name="Schwartz D.C."/>
            <person name="Blattner F.R."/>
        </authorList>
    </citation>
    <scope>NUCLEOTIDE SEQUENCE [LARGE SCALE GENOMIC DNA]</scope>
    <source>
        <strain>ATCC 700931 / Ty2</strain>
    </source>
</reference>
<evidence type="ECO:0000250" key="1"/>
<evidence type="ECO:0000255" key="2"/>
<evidence type="ECO:0000305" key="3"/>
<dbReference type="EMBL" id="AL513382">
    <property type="protein sequence ID" value="CAD01942.1"/>
    <property type="molecule type" value="Genomic_DNA"/>
</dbReference>
<dbReference type="EMBL" id="AE014613">
    <property type="protein sequence ID" value="AAO68943.1"/>
    <property type="molecule type" value="Genomic_DNA"/>
</dbReference>
<dbReference type="RefSeq" id="NP_456105.1">
    <property type="nucleotide sequence ID" value="NC_003198.1"/>
</dbReference>
<dbReference type="RefSeq" id="WP_001175077.1">
    <property type="nucleotide sequence ID" value="NZ_WSUR01000011.1"/>
</dbReference>
<dbReference type="SMR" id="Q8Z6N7"/>
<dbReference type="STRING" id="220341.gene:17585632"/>
<dbReference type="KEGG" id="stt:t1293"/>
<dbReference type="KEGG" id="sty:STY1697"/>
<dbReference type="PATRIC" id="fig|220341.7.peg.1707"/>
<dbReference type="eggNOG" id="COG0534">
    <property type="taxonomic scope" value="Bacteria"/>
</dbReference>
<dbReference type="HOGENOM" id="CLU_012893_6_0_6"/>
<dbReference type="OMA" id="WFFVWKL"/>
<dbReference type="OrthoDB" id="9780160at2"/>
<dbReference type="Proteomes" id="UP000000541">
    <property type="component" value="Chromosome"/>
</dbReference>
<dbReference type="Proteomes" id="UP000002670">
    <property type="component" value="Chromosome"/>
</dbReference>
<dbReference type="GO" id="GO:0005886">
    <property type="term" value="C:plasma membrane"/>
    <property type="evidence" value="ECO:0007669"/>
    <property type="project" value="UniProtKB-SubCell"/>
</dbReference>
<dbReference type="GO" id="GO:0015297">
    <property type="term" value="F:antiporter activity"/>
    <property type="evidence" value="ECO:0007669"/>
    <property type="project" value="UniProtKB-UniRule"/>
</dbReference>
<dbReference type="GO" id="GO:0042910">
    <property type="term" value="F:xenobiotic transmembrane transporter activity"/>
    <property type="evidence" value="ECO:0007669"/>
    <property type="project" value="UniProtKB-UniRule"/>
</dbReference>
<dbReference type="GO" id="GO:0006814">
    <property type="term" value="P:sodium ion transport"/>
    <property type="evidence" value="ECO:0007669"/>
    <property type="project" value="UniProtKB-UniRule"/>
</dbReference>
<dbReference type="GO" id="GO:0006855">
    <property type="term" value="P:xenobiotic transmembrane transport"/>
    <property type="evidence" value="ECO:0007669"/>
    <property type="project" value="UniProtKB-UniRule"/>
</dbReference>
<dbReference type="CDD" id="cd13131">
    <property type="entry name" value="MATE_NorM_like"/>
    <property type="match status" value="1"/>
</dbReference>
<dbReference type="HAMAP" id="MF_00400">
    <property type="entry name" value="MdtK"/>
    <property type="match status" value="1"/>
</dbReference>
<dbReference type="InterPro" id="IPR002528">
    <property type="entry name" value="MATE_fam"/>
</dbReference>
<dbReference type="InterPro" id="IPR050222">
    <property type="entry name" value="MATE_MdtK"/>
</dbReference>
<dbReference type="InterPro" id="IPR048279">
    <property type="entry name" value="MdtK-like"/>
</dbReference>
<dbReference type="InterPro" id="IPR022913">
    <property type="entry name" value="Multidrug-R_MdtK"/>
</dbReference>
<dbReference type="NCBIfam" id="TIGR00797">
    <property type="entry name" value="matE"/>
    <property type="match status" value="1"/>
</dbReference>
<dbReference type="PANTHER" id="PTHR43298:SF2">
    <property type="entry name" value="FMN_FAD EXPORTER YEEO-RELATED"/>
    <property type="match status" value="1"/>
</dbReference>
<dbReference type="PANTHER" id="PTHR43298">
    <property type="entry name" value="MULTIDRUG RESISTANCE PROTEIN NORM-RELATED"/>
    <property type="match status" value="1"/>
</dbReference>
<dbReference type="Pfam" id="PF01554">
    <property type="entry name" value="MatE"/>
    <property type="match status" value="2"/>
</dbReference>
<dbReference type="PIRSF" id="PIRSF006603">
    <property type="entry name" value="DinF"/>
    <property type="match status" value="1"/>
</dbReference>
<sequence length="457" mass="49426">MQKYTSEARQLLALAIPVILAQVAQTAMGFVDTVMAGGYSATDMAAVAIGTSIWLPAILFGHGLLLALTPVIAQLNGSGRRERIAHQVRQGFWLAGFVSVLVMIVLWNAGYIIRSMHNIDPALADKAVGYLRALLWGAPGYLFFQVARNQCEGLAKTKPGMVMGFLGLLVNIPVNYIFIYGHFGMPELGGIGCGVATAAVYWVMFIAMLSYIKHARSMRDIRNEKGFGKPDSVVMKRLIQLGLPIALALFFEVTLFAVVALLVSPLGIVDVAGHQIALNFSSLMFVLPMSLAAAVTIRVGYRLGQGSTLDAQTAARTGLGVGICMAVVTAIFTVTLRKHIALLYNDNPEVVALAAQLMLLAAVYQISDSIQVIGSGILRGYKDTRSIFFITFTAYWVLGLPSGYILALTDLVVDRMGPAGFWMGFIIGLTSAAVLMMLRMRYLQRQPSAIILQRAAR</sequence>
<proteinExistence type="inferred from homology"/>
<feature type="chain" id="PRO_0000164189" description="Multidrug resistance protein MdtK">
    <location>
        <begin position="1"/>
        <end position="457"/>
    </location>
</feature>
<feature type="topological domain" description="Cytoplasmic" evidence="2">
    <location>
        <begin position="1"/>
        <end position="10"/>
    </location>
</feature>
<feature type="transmembrane region" description="Helical" evidence="2">
    <location>
        <begin position="11"/>
        <end position="31"/>
    </location>
</feature>
<feature type="topological domain" description="Extracellular" evidence="2">
    <location>
        <begin position="32"/>
        <end position="52"/>
    </location>
</feature>
<feature type="transmembrane region" description="Helical" evidence="2">
    <location>
        <begin position="53"/>
        <end position="73"/>
    </location>
</feature>
<feature type="topological domain" description="Cytoplasmic" evidence="2">
    <location>
        <begin position="74"/>
        <end position="92"/>
    </location>
</feature>
<feature type="transmembrane region" description="Helical" evidence="2">
    <location>
        <begin position="93"/>
        <end position="113"/>
    </location>
</feature>
<feature type="topological domain" description="Extracellular" evidence="2">
    <location>
        <begin position="114"/>
        <end position="126"/>
    </location>
</feature>
<feature type="transmembrane region" description="Helical" evidence="2">
    <location>
        <begin position="127"/>
        <end position="147"/>
    </location>
</feature>
<feature type="topological domain" description="Cytoplasmic" evidence="2">
    <location>
        <begin position="148"/>
        <end position="159"/>
    </location>
</feature>
<feature type="transmembrane region" description="Helical" evidence="2">
    <location>
        <begin position="160"/>
        <end position="180"/>
    </location>
</feature>
<feature type="topological domain" description="Extracellular" evidence="2">
    <location>
        <begin position="181"/>
        <end position="187"/>
    </location>
</feature>
<feature type="transmembrane region" description="Helical" evidence="2">
    <location>
        <begin position="188"/>
        <end position="208"/>
    </location>
</feature>
<feature type="topological domain" description="Cytoplasmic" evidence="2">
    <location>
        <begin position="209"/>
        <end position="242"/>
    </location>
</feature>
<feature type="transmembrane region" description="Helical" evidence="2">
    <location>
        <begin position="243"/>
        <end position="263"/>
    </location>
</feature>
<feature type="topological domain" description="Extracellular" evidence="2">
    <location>
        <begin position="264"/>
        <end position="275"/>
    </location>
</feature>
<feature type="transmembrane region" description="Helical" evidence="2">
    <location>
        <begin position="276"/>
        <end position="296"/>
    </location>
</feature>
<feature type="topological domain" description="Cytoplasmic" evidence="2">
    <location>
        <begin position="297"/>
        <end position="313"/>
    </location>
</feature>
<feature type="transmembrane region" description="Helical" evidence="2">
    <location>
        <begin position="314"/>
        <end position="334"/>
    </location>
</feature>
<feature type="topological domain" description="Extracellular" evidence="2">
    <location>
        <begin position="335"/>
        <end position="349"/>
    </location>
</feature>
<feature type="transmembrane region" description="Helical" evidence="2">
    <location>
        <begin position="350"/>
        <end position="370"/>
    </location>
</feature>
<feature type="topological domain" description="Cytoplasmic" evidence="2">
    <location>
        <begin position="371"/>
        <end position="386"/>
    </location>
</feature>
<feature type="transmembrane region" description="Helical" evidence="2">
    <location>
        <begin position="387"/>
        <end position="407"/>
    </location>
</feature>
<feature type="topological domain" description="Extracellular" evidence="2">
    <location>
        <begin position="408"/>
        <end position="417"/>
    </location>
</feature>
<feature type="transmembrane region" description="Helical" evidence="2">
    <location>
        <begin position="418"/>
        <end position="438"/>
    </location>
</feature>
<feature type="topological domain" description="Cytoplasmic" evidence="2">
    <location>
        <begin position="439"/>
        <end position="457"/>
    </location>
</feature>
<name>MDTK_SALTI</name>
<gene>
    <name type="primary">mdtK</name>
    <name type="synonym">norM</name>
    <name type="ordered locus">STY1697</name>
    <name type="ordered locus">t1293</name>
</gene>